<reference key="1">
    <citation type="journal article" date="2010" name="J. Bacteriol.">
        <title>Genome sequence of the deep-rooted Yersinia pestis strain Angola reveals new insights into the evolution and pangenome of the plague bacterium.</title>
        <authorList>
            <person name="Eppinger M."/>
            <person name="Worsham P.L."/>
            <person name="Nikolich M.P."/>
            <person name="Riley D.R."/>
            <person name="Sebastian Y."/>
            <person name="Mou S."/>
            <person name="Achtman M."/>
            <person name="Lindler L.E."/>
            <person name="Ravel J."/>
        </authorList>
    </citation>
    <scope>NUCLEOTIDE SEQUENCE [LARGE SCALE GENOMIC DNA]</scope>
    <source>
        <strain>Angola</strain>
    </source>
</reference>
<proteinExistence type="inferred from homology"/>
<comment type="function">
    <text evidence="1">Catalyzes the transfer of a dimethylallyl group onto the adenine at position 37 in tRNAs that read codons beginning with uridine, leading to the formation of N6-(dimethylallyl)adenosine (i(6)A).</text>
</comment>
<comment type="catalytic activity">
    <reaction evidence="1">
        <text>adenosine(37) in tRNA + dimethylallyl diphosphate = N(6)-dimethylallyladenosine(37) in tRNA + diphosphate</text>
        <dbReference type="Rhea" id="RHEA:26482"/>
        <dbReference type="Rhea" id="RHEA-COMP:10162"/>
        <dbReference type="Rhea" id="RHEA-COMP:10375"/>
        <dbReference type="ChEBI" id="CHEBI:33019"/>
        <dbReference type="ChEBI" id="CHEBI:57623"/>
        <dbReference type="ChEBI" id="CHEBI:74411"/>
        <dbReference type="ChEBI" id="CHEBI:74415"/>
        <dbReference type="EC" id="2.5.1.75"/>
    </reaction>
</comment>
<comment type="cofactor">
    <cofactor evidence="1">
        <name>Mg(2+)</name>
        <dbReference type="ChEBI" id="CHEBI:18420"/>
    </cofactor>
</comment>
<comment type="subunit">
    <text evidence="1">Monomer.</text>
</comment>
<comment type="similarity">
    <text evidence="1">Belongs to the IPP transferase family.</text>
</comment>
<keyword id="KW-0067">ATP-binding</keyword>
<keyword id="KW-0460">Magnesium</keyword>
<keyword id="KW-0547">Nucleotide-binding</keyword>
<keyword id="KW-0808">Transferase</keyword>
<keyword id="KW-0819">tRNA processing</keyword>
<accession>A9QYN2</accession>
<sequence>MNDIENLDRPPAIFIMGPTASGKTALSIALRQRLPVELVSVDSALIYRGMDIGTAKPSAQELALAPHRLIDIRDPAESYSAADFRKDALKEMADITAAGRIPLLVGGTMLYFKALLDGLSPLPSADPQVRQRIEQQASELGWGALHQQLAVIDPVAAARIHPNDPQRLSRALEVFFISGKTLTELTKISGETLPYRVHQFAIAPASRELLHQRIELRFHQMLDAGFEAEARVLFDRGDLHTDLPAIRCVGYRQMWSYLSGEIDYNDMVYRGVCATRQLAKRQMTWLRGWSSVQWLDSDKPGEALDSVIQVVSA</sequence>
<evidence type="ECO:0000255" key="1">
    <source>
        <dbReference type="HAMAP-Rule" id="MF_00185"/>
    </source>
</evidence>
<gene>
    <name evidence="1" type="primary">miaA</name>
    <name type="ordered locus">YpAngola_A0700</name>
</gene>
<protein>
    <recommendedName>
        <fullName evidence="1">tRNA dimethylallyltransferase</fullName>
        <ecNumber evidence="1">2.5.1.75</ecNumber>
    </recommendedName>
    <alternativeName>
        <fullName evidence="1">Dimethylallyl diphosphate:tRNA dimethylallyltransferase</fullName>
        <shortName evidence="1">DMAPP:tRNA dimethylallyltransferase</shortName>
        <shortName evidence="1">DMATase</shortName>
    </alternativeName>
    <alternativeName>
        <fullName evidence="1">Isopentenyl-diphosphate:tRNA isopentenyltransferase</fullName>
        <shortName evidence="1">IPP transferase</shortName>
        <shortName evidence="1">IPPT</shortName>
        <shortName evidence="1">IPTase</shortName>
    </alternativeName>
</protein>
<organism>
    <name type="scientific">Yersinia pestis bv. Antiqua (strain Angola)</name>
    <dbReference type="NCBI Taxonomy" id="349746"/>
    <lineage>
        <taxon>Bacteria</taxon>
        <taxon>Pseudomonadati</taxon>
        <taxon>Pseudomonadota</taxon>
        <taxon>Gammaproteobacteria</taxon>
        <taxon>Enterobacterales</taxon>
        <taxon>Yersiniaceae</taxon>
        <taxon>Yersinia</taxon>
    </lineage>
</organism>
<dbReference type="EC" id="2.5.1.75" evidence="1"/>
<dbReference type="EMBL" id="CP000901">
    <property type="protein sequence ID" value="ABX85894.1"/>
    <property type="molecule type" value="Genomic_DNA"/>
</dbReference>
<dbReference type="RefSeq" id="WP_002209149.1">
    <property type="nucleotide sequence ID" value="NZ_CP009935.1"/>
</dbReference>
<dbReference type="SMR" id="A9QYN2"/>
<dbReference type="GeneID" id="57974235"/>
<dbReference type="KEGG" id="ypg:YpAngola_A0700"/>
<dbReference type="PATRIC" id="fig|349746.12.peg.1648"/>
<dbReference type="GO" id="GO:0005524">
    <property type="term" value="F:ATP binding"/>
    <property type="evidence" value="ECO:0007669"/>
    <property type="project" value="UniProtKB-UniRule"/>
</dbReference>
<dbReference type="GO" id="GO:0052381">
    <property type="term" value="F:tRNA dimethylallyltransferase activity"/>
    <property type="evidence" value="ECO:0007669"/>
    <property type="project" value="UniProtKB-UniRule"/>
</dbReference>
<dbReference type="GO" id="GO:0006400">
    <property type="term" value="P:tRNA modification"/>
    <property type="evidence" value="ECO:0007669"/>
    <property type="project" value="TreeGrafter"/>
</dbReference>
<dbReference type="FunFam" id="1.10.20.140:FF:000001">
    <property type="entry name" value="tRNA dimethylallyltransferase"/>
    <property type="match status" value="1"/>
</dbReference>
<dbReference type="Gene3D" id="1.10.20.140">
    <property type="match status" value="1"/>
</dbReference>
<dbReference type="Gene3D" id="3.40.50.300">
    <property type="entry name" value="P-loop containing nucleotide triphosphate hydrolases"/>
    <property type="match status" value="1"/>
</dbReference>
<dbReference type="HAMAP" id="MF_00185">
    <property type="entry name" value="IPP_trans"/>
    <property type="match status" value="1"/>
</dbReference>
<dbReference type="InterPro" id="IPR039657">
    <property type="entry name" value="Dimethylallyltransferase"/>
</dbReference>
<dbReference type="InterPro" id="IPR018022">
    <property type="entry name" value="IPT"/>
</dbReference>
<dbReference type="InterPro" id="IPR027417">
    <property type="entry name" value="P-loop_NTPase"/>
</dbReference>
<dbReference type="NCBIfam" id="TIGR00174">
    <property type="entry name" value="miaA"/>
    <property type="match status" value="1"/>
</dbReference>
<dbReference type="PANTHER" id="PTHR11088">
    <property type="entry name" value="TRNA DIMETHYLALLYLTRANSFERASE"/>
    <property type="match status" value="1"/>
</dbReference>
<dbReference type="PANTHER" id="PTHR11088:SF60">
    <property type="entry name" value="TRNA DIMETHYLALLYLTRANSFERASE"/>
    <property type="match status" value="1"/>
</dbReference>
<dbReference type="Pfam" id="PF01715">
    <property type="entry name" value="IPPT"/>
    <property type="match status" value="1"/>
</dbReference>
<dbReference type="SUPFAM" id="SSF52540">
    <property type="entry name" value="P-loop containing nucleoside triphosphate hydrolases"/>
    <property type="match status" value="1"/>
</dbReference>
<name>MIAA_YERPG</name>
<feature type="chain" id="PRO_1000098706" description="tRNA dimethylallyltransferase">
    <location>
        <begin position="1"/>
        <end position="313"/>
    </location>
</feature>
<feature type="region of interest" description="Interaction with substrate tRNA" evidence="1">
    <location>
        <begin position="42"/>
        <end position="45"/>
    </location>
</feature>
<feature type="region of interest" description="Interaction with substrate tRNA" evidence="1">
    <location>
        <begin position="166"/>
        <end position="170"/>
    </location>
</feature>
<feature type="region of interest" description="Interaction with substrate tRNA" evidence="1">
    <location>
        <begin position="247"/>
        <end position="252"/>
    </location>
</feature>
<feature type="binding site" evidence="1">
    <location>
        <begin position="17"/>
        <end position="24"/>
    </location>
    <ligand>
        <name>ATP</name>
        <dbReference type="ChEBI" id="CHEBI:30616"/>
    </ligand>
</feature>
<feature type="binding site" evidence="1">
    <location>
        <begin position="19"/>
        <end position="24"/>
    </location>
    <ligand>
        <name>substrate</name>
    </ligand>
</feature>
<feature type="site" description="Interaction with substrate tRNA" evidence="1">
    <location>
        <position position="108"/>
    </location>
</feature>
<feature type="site" description="Interaction with substrate tRNA" evidence="1">
    <location>
        <position position="130"/>
    </location>
</feature>